<dbReference type="EC" id="5.4.3.-"/>
<dbReference type="EMBL" id="AE000657">
    <property type="protein sequence ID" value="AAC06722.1"/>
    <property type="molecule type" value="Genomic_DNA"/>
</dbReference>
<dbReference type="PIR" id="E70341">
    <property type="entry name" value="E70341"/>
</dbReference>
<dbReference type="RefSeq" id="NP_213321.1">
    <property type="nucleotide sequence ID" value="NC_000918.1"/>
</dbReference>
<dbReference type="RefSeq" id="WP_010880259.1">
    <property type="nucleotide sequence ID" value="NC_000918.1"/>
</dbReference>
<dbReference type="SMR" id="O66761"/>
<dbReference type="FunCoup" id="O66761">
    <property type="interactions" value="46"/>
</dbReference>
<dbReference type="STRING" id="224324.aq_454"/>
<dbReference type="EnsemblBacteria" id="AAC06722">
    <property type="protein sequence ID" value="AAC06722"/>
    <property type="gene ID" value="aq_454"/>
</dbReference>
<dbReference type="KEGG" id="aae:aq_454"/>
<dbReference type="PATRIC" id="fig|224324.8.peg.377"/>
<dbReference type="eggNOG" id="COG1509">
    <property type="taxonomic scope" value="Bacteria"/>
</dbReference>
<dbReference type="HOGENOM" id="CLU_032161_0_0_0"/>
<dbReference type="InParanoid" id="O66761"/>
<dbReference type="OrthoDB" id="9768064at2"/>
<dbReference type="Proteomes" id="UP000000798">
    <property type="component" value="Chromosome"/>
</dbReference>
<dbReference type="GO" id="GO:0051539">
    <property type="term" value="F:4 iron, 4 sulfur cluster binding"/>
    <property type="evidence" value="ECO:0000318"/>
    <property type="project" value="GO_Central"/>
</dbReference>
<dbReference type="GO" id="GO:0016869">
    <property type="term" value="F:intramolecular aminotransferase activity"/>
    <property type="evidence" value="ECO:0000318"/>
    <property type="project" value="GO_Central"/>
</dbReference>
<dbReference type="GO" id="GO:0046872">
    <property type="term" value="F:metal ion binding"/>
    <property type="evidence" value="ECO:0007669"/>
    <property type="project" value="UniProtKB-KW"/>
</dbReference>
<dbReference type="CDD" id="cd01335">
    <property type="entry name" value="Radical_SAM"/>
    <property type="match status" value="1"/>
</dbReference>
<dbReference type="Gene3D" id="6.10.140.1170">
    <property type="match status" value="1"/>
</dbReference>
<dbReference type="Gene3D" id="3.20.20.70">
    <property type="entry name" value="Aldolase class I"/>
    <property type="match status" value="1"/>
</dbReference>
<dbReference type="InterPro" id="IPR013785">
    <property type="entry name" value="Aldolase_TIM"/>
</dbReference>
<dbReference type="InterPro" id="IPR025895">
    <property type="entry name" value="LAM_C_dom"/>
</dbReference>
<dbReference type="InterPro" id="IPR003739">
    <property type="entry name" value="Lys_aminomutase/Glu_NH3_mut"/>
</dbReference>
<dbReference type="InterPro" id="IPR007197">
    <property type="entry name" value="rSAM"/>
</dbReference>
<dbReference type="NCBIfam" id="TIGR00238">
    <property type="entry name" value="KamA family radical SAM protein"/>
    <property type="match status" value="1"/>
</dbReference>
<dbReference type="PANTHER" id="PTHR30538:SF1">
    <property type="entry name" value="L-LYSINE 2,3-AMINOMUTASE"/>
    <property type="match status" value="1"/>
</dbReference>
<dbReference type="PANTHER" id="PTHR30538">
    <property type="entry name" value="LYSINE 2,3-AMINOMUTASE-RELATED"/>
    <property type="match status" value="1"/>
</dbReference>
<dbReference type="Pfam" id="PF13353">
    <property type="entry name" value="Fer4_12"/>
    <property type="match status" value="1"/>
</dbReference>
<dbReference type="Pfam" id="PF12544">
    <property type="entry name" value="LAM_C"/>
    <property type="match status" value="1"/>
</dbReference>
<dbReference type="Pfam" id="PF04055">
    <property type="entry name" value="Radical_SAM"/>
    <property type="match status" value="1"/>
</dbReference>
<dbReference type="PIRSF" id="PIRSF004911">
    <property type="entry name" value="DUF160"/>
    <property type="match status" value="1"/>
</dbReference>
<dbReference type="SFLD" id="SFLDG01070">
    <property type="entry name" value="PLP-dependent"/>
    <property type="match status" value="1"/>
</dbReference>
<dbReference type="SFLD" id="SFLDS00029">
    <property type="entry name" value="Radical_SAM"/>
    <property type="match status" value="1"/>
</dbReference>
<dbReference type="SUPFAM" id="SSF102114">
    <property type="entry name" value="Radical SAM enzymes"/>
    <property type="match status" value="1"/>
</dbReference>
<dbReference type="PROSITE" id="PS51918">
    <property type="entry name" value="RADICAL_SAM"/>
    <property type="match status" value="1"/>
</dbReference>
<keyword id="KW-0004">4Fe-4S</keyword>
<keyword id="KW-0408">Iron</keyword>
<keyword id="KW-0411">Iron-sulfur</keyword>
<keyword id="KW-0413">Isomerase</keyword>
<keyword id="KW-0479">Metal-binding</keyword>
<keyword id="KW-0663">Pyridoxal phosphate</keyword>
<keyword id="KW-1185">Reference proteome</keyword>
<keyword id="KW-0949">S-adenosyl-L-methionine</keyword>
<organism>
    <name type="scientific">Aquifex aeolicus (strain VF5)</name>
    <dbReference type="NCBI Taxonomy" id="224324"/>
    <lineage>
        <taxon>Bacteria</taxon>
        <taxon>Pseudomonadati</taxon>
        <taxon>Aquificota</taxon>
        <taxon>Aquificia</taxon>
        <taxon>Aquificales</taxon>
        <taxon>Aquificaceae</taxon>
        <taxon>Aquifex</taxon>
    </lineage>
</organism>
<comment type="cofactor">
    <cofactor evidence="1">
        <name>[4Fe-4S] cluster</name>
        <dbReference type="ChEBI" id="CHEBI:49883"/>
    </cofactor>
    <text evidence="1">Binds 1 [4Fe-4S] cluster. The cluster is coordinated with 3 cysteines and an exchangeable S-adenosyl-L-methionine.</text>
</comment>
<comment type="cofactor">
    <cofactor evidence="1">
        <name>pyridoxal 5'-phosphate</name>
        <dbReference type="ChEBI" id="CHEBI:597326"/>
    </cofactor>
</comment>
<comment type="similarity">
    <text evidence="4">Belongs to the radical SAM superfamily. KamA family.</text>
</comment>
<sequence>MRRFFENVPENLWRSYEWQIQNRIKTLKEIKKYLKLLPEEEEGIKRTQGLYPFAITPYYLSLINPEDPKDPIRLQAIPRVVEVDEKVQSAGEPDALKEEGDIPGLTHRYPDRVLLNVTTFCAVYCRHCMRKRIFSQGERARTKEEIDTMIDYIKRHEEIRDVLISGGEPLSLSLEKLEYLLSRLREIKHVEIIRFGTRLPVLAPQRFFNDKLLDILEKYSPIWINTHFNHPNEITEYAEEAVDRLLRRGIPVNNQTVLLKGVNDDPEVMLKLFRKLLRIKVKPQYLFHCDPIKGAVHFRTTIDKGLEIMRYLRGRLSGFGIPTYAVDLPGGKGKVPLLPNYVKKRKGNKFWFESFTGEVVEYEVTEVWEP</sequence>
<evidence type="ECO:0000250" key="1"/>
<evidence type="ECO:0000255" key="2"/>
<evidence type="ECO:0000255" key="3">
    <source>
        <dbReference type="PROSITE-ProRule" id="PRU01266"/>
    </source>
</evidence>
<evidence type="ECO:0000305" key="4"/>
<feature type="chain" id="PRO_0000172290" description="Putative L-lysine 2,3-aminomutase aq_454">
    <location>
        <begin position="1"/>
        <end position="370"/>
    </location>
</feature>
<feature type="domain" description="Radical SAM core" evidence="3">
    <location>
        <begin position="107"/>
        <end position="322"/>
    </location>
</feature>
<feature type="binding site" evidence="2">
    <location>
        <position position="121"/>
    </location>
    <ligand>
        <name>[4Fe-4S] cluster</name>
        <dbReference type="ChEBI" id="CHEBI:49883"/>
        <note>4Fe-4S-S-AdoMet</note>
    </ligand>
</feature>
<feature type="binding site" evidence="2">
    <location>
        <position position="125"/>
    </location>
    <ligand>
        <name>[4Fe-4S] cluster</name>
        <dbReference type="ChEBI" id="CHEBI:49883"/>
        <note>4Fe-4S-S-AdoMet</note>
    </ligand>
</feature>
<feature type="binding site" evidence="2">
    <location>
        <position position="128"/>
    </location>
    <ligand>
        <name>[4Fe-4S] cluster</name>
        <dbReference type="ChEBI" id="CHEBI:49883"/>
        <note>4Fe-4S-S-AdoMet</note>
    </ligand>
</feature>
<feature type="modified residue" description="N6-(pyridoxal phosphate)lysine" evidence="1">
    <location>
        <position position="334"/>
    </location>
</feature>
<name>Y454_AQUAE</name>
<proteinExistence type="inferred from homology"/>
<gene>
    <name type="ordered locus">aq_454</name>
</gene>
<reference key="1">
    <citation type="journal article" date="1998" name="Nature">
        <title>The complete genome of the hyperthermophilic bacterium Aquifex aeolicus.</title>
        <authorList>
            <person name="Deckert G."/>
            <person name="Warren P.V."/>
            <person name="Gaasterland T."/>
            <person name="Young W.G."/>
            <person name="Lenox A.L."/>
            <person name="Graham D.E."/>
            <person name="Overbeek R."/>
            <person name="Snead M.A."/>
            <person name="Keller M."/>
            <person name="Aujay M."/>
            <person name="Huber R."/>
            <person name="Feldman R.A."/>
            <person name="Short J.M."/>
            <person name="Olsen G.J."/>
            <person name="Swanson R.V."/>
        </authorList>
    </citation>
    <scope>NUCLEOTIDE SEQUENCE [LARGE SCALE GENOMIC DNA]</scope>
    <source>
        <strain>VF5</strain>
    </source>
</reference>
<protein>
    <recommendedName>
        <fullName>Putative L-lysine 2,3-aminomutase aq_454</fullName>
        <shortName>LAM</shortName>
        <ecNumber>5.4.3.-</ecNumber>
    </recommendedName>
</protein>
<accession>O66761</accession>